<sequence>MSSFHQNSSYMEDADYPGYSGSRNHTHNYLETQDYPEFPGSQNNPGFHHPRSNPHSSGSRTNPDYPYFQEEPDYPGSLSNTVYQDTRSHPFSAHSRTRPDYESSIEPDYNDFRSESYHAGLPMEPDYPGSQSHPGFAGVGRSSMNYTGPRTNLGYLGSLEEPDYPGAQDNSYYHSGSRPHSNLPGSRRDAGYAGSRINSYPDDLGEPDYPGAENQPNSPRFYGKPDYPGAEEGDGYSSSKSLAVIRRGNGPFGMLGRRNEDYPEGIGMVSMEMAGDPRNGYVNPAYTRRISPVCPDRNLLLCAHDWHTSVQGQKLIASLIPMTTRDRIKTIRNQPRTMQEKRELRKIVDKEKNKQSHGILEANCCAQCLGSLSLTYRRTRNGLSELLNYITLWQKRFKVIGGKFGTSVLSYFSFLRWLLKFNIFSFVMNFSFIIIPQFTVGAKNTLQFTGLEFFTGAGYFGDTVMYYGFYTNSTIRHRMGGASYNMQLAYIFTIGACLVVCFFSLLFSMAKYFRNNFINPHIYSRGIAKLIFCWDFTVTHEKAVKLKQKNLSTEIRENLSELRQENYRLTFNQQLTRFSAHVAAWLVSTGVTAACCVAVYYLAEYNSEFLKTHRNPGAVLLLPFVVSCINLAVPRFYSMFRLVERYEIPRQEVYVLLVRNIFLKISIVGILCYYWLNIVALSGEECWETLIGQDIYRLLLMDFVFSLADSLLGEFLRRLIGMKFTSLSLQEFDIARNVLELIYAQTLTWLGIFFCPLLPFIQMITLFIMFYVKNVSLMMNFQPPSKAWRASQMITFFIFLLFFPSFTGVLCTLAITIWRLKPSADCGPFRGLPSFIQSIYSWIDTLSRRPGYLWVVWIYQNLIGSVHFFFILTLIVLIITYLYWQITEGRKVMIRLLHEQIINEGKDKMFLIEKLTKLQDMEKRVNPSALDLERREVEPQIPLHLEELGAAPDLRLRRSAQEENPIA</sequence>
<reference key="1">
    <citation type="journal article" date="2003" name="BMC Genomics">
        <title>TMC and EVER genes belong to a larger novel family, the TMC gene family encoding transmembrane proteins.</title>
        <authorList>
            <person name="Keresztes G."/>
            <person name="Mutai H."/>
            <person name="Heller S."/>
        </authorList>
    </citation>
    <scope>NUCLEOTIDE SEQUENCE [MRNA] (ISOFORM 2)</scope>
    <scope>TISSUE SPECIFICITY</scope>
    <source>
        <strain>C57BL/6J</strain>
    </source>
</reference>
<reference key="2">
    <citation type="journal article" date="2003" name="Genomics">
        <title>Characterization of the transmembrane channel-like (TMC) gene family: functional clues from hearing loss and epidermodysplasia verruciformis.</title>
        <authorList>
            <person name="Kurima K."/>
            <person name="Yang Y."/>
            <person name="Sorber K."/>
            <person name="Griffith A.J."/>
        </authorList>
    </citation>
    <scope>NUCLEOTIDE SEQUENCE [MRNA] (ISOFORM 2)</scope>
</reference>
<reference key="3">
    <citation type="journal article" date="2005" name="Science">
        <title>The transcriptional landscape of the mammalian genome.</title>
        <authorList>
            <person name="Carninci P."/>
            <person name="Kasukawa T."/>
            <person name="Katayama S."/>
            <person name="Gough J."/>
            <person name="Frith M.C."/>
            <person name="Maeda N."/>
            <person name="Oyama R."/>
            <person name="Ravasi T."/>
            <person name="Lenhard B."/>
            <person name="Wells C."/>
            <person name="Kodzius R."/>
            <person name="Shimokawa K."/>
            <person name="Bajic V.B."/>
            <person name="Brenner S.E."/>
            <person name="Batalov S."/>
            <person name="Forrest A.R."/>
            <person name="Zavolan M."/>
            <person name="Davis M.J."/>
            <person name="Wilming L.G."/>
            <person name="Aidinis V."/>
            <person name="Allen J.E."/>
            <person name="Ambesi-Impiombato A."/>
            <person name="Apweiler R."/>
            <person name="Aturaliya R.N."/>
            <person name="Bailey T.L."/>
            <person name="Bansal M."/>
            <person name="Baxter L."/>
            <person name="Beisel K.W."/>
            <person name="Bersano T."/>
            <person name="Bono H."/>
            <person name="Chalk A.M."/>
            <person name="Chiu K.P."/>
            <person name="Choudhary V."/>
            <person name="Christoffels A."/>
            <person name="Clutterbuck D.R."/>
            <person name="Crowe M.L."/>
            <person name="Dalla E."/>
            <person name="Dalrymple B.P."/>
            <person name="de Bono B."/>
            <person name="Della Gatta G."/>
            <person name="di Bernardo D."/>
            <person name="Down T."/>
            <person name="Engstrom P."/>
            <person name="Fagiolini M."/>
            <person name="Faulkner G."/>
            <person name="Fletcher C.F."/>
            <person name="Fukushima T."/>
            <person name="Furuno M."/>
            <person name="Futaki S."/>
            <person name="Gariboldi M."/>
            <person name="Georgii-Hemming P."/>
            <person name="Gingeras T.R."/>
            <person name="Gojobori T."/>
            <person name="Green R.E."/>
            <person name="Gustincich S."/>
            <person name="Harbers M."/>
            <person name="Hayashi Y."/>
            <person name="Hensch T.K."/>
            <person name="Hirokawa N."/>
            <person name="Hill D."/>
            <person name="Huminiecki L."/>
            <person name="Iacono M."/>
            <person name="Ikeo K."/>
            <person name="Iwama A."/>
            <person name="Ishikawa T."/>
            <person name="Jakt M."/>
            <person name="Kanapin A."/>
            <person name="Katoh M."/>
            <person name="Kawasawa Y."/>
            <person name="Kelso J."/>
            <person name="Kitamura H."/>
            <person name="Kitano H."/>
            <person name="Kollias G."/>
            <person name="Krishnan S.P."/>
            <person name="Kruger A."/>
            <person name="Kummerfeld S.K."/>
            <person name="Kurochkin I.V."/>
            <person name="Lareau L.F."/>
            <person name="Lazarevic D."/>
            <person name="Lipovich L."/>
            <person name="Liu J."/>
            <person name="Liuni S."/>
            <person name="McWilliam S."/>
            <person name="Madan Babu M."/>
            <person name="Madera M."/>
            <person name="Marchionni L."/>
            <person name="Matsuda H."/>
            <person name="Matsuzawa S."/>
            <person name="Miki H."/>
            <person name="Mignone F."/>
            <person name="Miyake S."/>
            <person name="Morris K."/>
            <person name="Mottagui-Tabar S."/>
            <person name="Mulder N."/>
            <person name="Nakano N."/>
            <person name="Nakauchi H."/>
            <person name="Ng P."/>
            <person name="Nilsson R."/>
            <person name="Nishiguchi S."/>
            <person name="Nishikawa S."/>
            <person name="Nori F."/>
            <person name="Ohara O."/>
            <person name="Okazaki Y."/>
            <person name="Orlando V."/>
            <person name="Pang K.C."/>
            <person name="Pavan W.J."/>
            <person name="Pavesi G."/>
            <person name="Pesole G."/>
            <person name="Petrovsky N."/>
            <person name="Piazza S."/>
            <person name="Reed J."/>
            <person name="Reid J.F."/>
            <person name="Ring B.Z."/>
            <person name="Ringwald M."/>
            <person name="Rost B."/>
            <person name="Ruan Y."/>
            <person name="Salzberg S.L."/>
            <person name="Sandelin A."/>
            <person name="Schneider C."/>
            <person name="Schoenbach C."/>
            <person name="Sekiguchi K."/>
            <person name="Semple C.A."/>
            <person name="Seno S."/>
            <person name="Sessa L."/>
            <person name="Sheng Y."/>
            <person name="Shibata Y."/>
            <person name="Shimada H."/>
            <person name="Shimada K."/>
            <person name="Silva D."/>
            <person name="Sinclair B."/>
            <person name="Sperling S."/>
            <person name="Stupka E."/>
            <person name="Sugiura K."/>
            <person name="Sultana R."/>
            <person name="Takenaka Y."/>
            <person name="Taki K."/>
            <person name="Tammoja K."/>
            <person name="Tan S.L."/>
            <person name="Tang S."/>
            <person name="Taylor M.S."/>
            <person name="Tegner J."/>
            <person name="Teichmann S.A."/>
            <person name="Ueda H.R."/>
            <person name="van Nimwegen E."/>
            <person name="Verardo R."/>
            <person name="Wei C.L."/>
            <person name="Yagi K."/>
            <person name="Yamanishi H."/>
            <person name="Zabarovsky E."/>
            <person name="Zhu S."/>
            <person name="Zimmer A."/>
            <person name="Hide W."/>
            <person name="Bult C."/>
            <person name="Grimmond S.M."/>
            <person name="Teasdale R.D."/>
            <person name="Liu E.T."/>
            <person name="Brusic V."/>
            <person name="Quackenbush J."/>
            <person name="Wahlestedt C."/>
            <person name="Mattick J.S."/>
            <person name="Hume D.A."/>
            <person name="Kai C."/>
            <person name="Sasaki D."/>
            <person name="Tomaru Y."/>
            <person name="Fukuda S."/>
            <person name="Kanamori-Katayama M."/>
            <person name="Suzuki M."/>
            <person name="Aoki J."/>
            <person name="Arakawa T."/>
            <person name="Iida J."/>
            <person name="Imamura K."/>
            <person name="Itoh M."/>
            <person name="Kato T."/>
            <person name="Kawaji H."/>
            <person name="Kawagashira N."/>
            <person name="Kawashima T."/>
            <person name="Kojima M."/>
            <person name="Kondo S."/>
            <person name="Konno H."/>
            <person name="Nakano K."/>
            <person name="Ninomiya N."/>
            <person name="Nishio T."/>
            <person name="Okada M."/>
            <person name="Plessy C."/>
            <person name="Shibata K."/>
            <person name="Shiraki T."/>
            <person name="Suzuki S."/>
            <person name="Tagami M."/>
            <person name="Waki K."/>
            <person name="Watahiki A."/>
            <person name="Okamura-Oho Y."/>
            <person name="Suzuki H."/>
            <person name="Kawai J."/>
            <person name="Hayashizaki Y."/>
        </authorList>
    </citation>
    <scope>NUCLEOTIDE SEQUENCE [LARGE SCALE MRNA] (ISOFORM 2)</scope>
    <source>
        <strain>C57BL/6J</strain>
        <tissue>Testis</tissue>
    </source>
</reference>
<reference key="4">
    <citation type="journal article" date="2004" name="Genome Res.">
        <title>The status, quality, and expansion of the NIH full-length cDNA project: the Mammalian Gene Collection (MGC).</title>
        <authorList>
            <consortium name="The MGC Project Team"/>
        </authorList>
    </citation>
    <scope>NUCLEOTIDE SEQUENCE [LARGE SCALE MRNA] (ISOFORM 1)</scope>
    <source>
        <strain>FVB/N</strain>
        <tissue>Mammary tumor</tissue>
    </source>
</reference>
<gene>
    <name evidence="8" type="primary">Tmc5</name>
</gene>
<protein>
    <recommendedName>
        <fullName>Transmembrane channel-like protein 5</fullName>
    </recommendedName>
</protein>
<keyword id="KW-0025">Alternative splicing</keyword>
<keyword id="KW-0472">Membrane</keyword>
<keyword id="KW-1185">Reference proteome</keyword>
<keyword id="KW-0812">Transmembrane</keyword>
<keyword id="KW-1133">Transmembrane helix</keyword>
<organism>
    <name type="scientific">Mus musculus</name>
    <name type="common">Mouse</name>
    <dbReference type="NCBI Taxonomy" id="10090"/>
    <lineage>
        <taxon>Eukaryota</taxon>
        <taxon>Metazoa</taxon>
        <taxon>Chordata</taxon>
        <taxon>Craniata</taxon>
        <taxon>Vertebrata</taxon>
        <taxon>Euteleostomi</taxon>
        <taxon>Mammalia</taxon>
        <taxon>Eutheria</taxon>
        <taxon>Euarchontoglires</taxon>
        <taxon>Glires</taxon>
        <taxon>Rodentia</taxon>
        <taxon>Myomorpha</taxon>
        <taxon>Muroidea</taxon>
        <taxon>Muridae</taxon>
        <taxon>Murinae</taxon>
        <taxon>Mus</taxon>
        <taxon>Mus</taxon>
    </lineage>
</organism>
<evidence type="ECO:0000255" key="1"/>
<evidence type="ECO:0000256" key="2">
    <source>
        <dbReference type="SAM" id="MobiDB-lite"/>
    </source>
</evidence>
<evidence type="ECO:0000269" key="3">
    <source>
    </source>
</evidence>
<evidence type="ECO:0000303" key="4">
    <source>
    </source>
</evidence>
<evidence type="ECO:0000303" key="5">
    <source>
    </source>
</evidence>
<evidence type="ECO:0000303" key="6">
    <source>
    </source>
</evidence>
<evidence type="ECO:0000305" key="7"/>
<evidence type="ECO:0000312" key="8">
    <source>
        <dbReference type="MGI" id="MGI:1921674"/>
    </source>
</evidence>
<accession>Q32NZ6</accession>
<accession>Q7TN61</accession>
<accession>Q80VR0</accession>
<accession>Q9D4F1</accession>
<comment type="function">
    <text evidence="7">Probable component of an ion channel (Probable). Molecular function hasn't been characterized yet (Probable).</text>
</comment>
<comment type="subcellular location">
    <subcellularLocation>
        <location evidence="7">Membrane</location>
        <topology evidence="7">Multi-pass membrane protein</topology>
    </subcellularLocation>
</comment>
<comment type="alternative products">
    <event type="alternative splicing"/>
    <isoform>
        <id>Q32NZ6-1</id>
        <name>1</name>
        <sequence type="displayed"/>
    </isoform>
    <isoform>
        <id>Q32NZ6-2</id>
        <name>2</name>
        <sequence type="described" ref="VSP_026047 VSP_026048"/>
    </isoform>
</comment>
<comment type="tissue specificity">
    <text evidence="3">Ubiquitously expressed.</text>
</comment>
<comment type="similarity">
    <text evidence="7">Belongs to the TMC family.</text>
</comment>
<name>TMC5_MOUSE</name>
<feature type="chain" id="PRO_0000289967" description="Transmembrane channel-like protein 5">
    <location>
        <begin position="1"/>
        <end position="967"/>
    </location>
</feature>
<feature type="topological domain" description="Extracellular" evidence="1">
    <location>
        <begin position="1"/>
        <end position="420"/>
    </location>
</feature>
<feature type="transmembrane region" description="Helical" evidence="1">
    <location>
        <begin position="421"/>
        <end position="441"/>
    </location>
</feature>
<feature type="topological domain" description="Cytoplasmic" evidence="1">
    <location>
        <begin position="442"/>
        <end position="449"/>
    </location>
</feature>
<feature type="transmembrane region" description="Helical" evidence="1">
    <location>
        <begin position="450"/>
        <end position="470"/>
    </location>
</feature>
<feature type="topological domain" description="Extracellular" evidence="1">
    <location>
        <begin position="471"/>
        <end position="487"/>
    </location>
</feature>
<feature type="transmembrane region" description="Helical" evidence="1">
    <location>
        <begin position="488"/>
        <end position="508"/>
    </location>
</feature>
<feature type="topological domain" description="Cytoplasmic" evidence="1">
    <location>
        <begin position="509"/>
        <end position="581"/>
    </location>
</feature>
<feature type="transmembrane region" description="Helical" evidence="1">
    <location>
        <begin position="582"/>
        <end position="602"/>
    </location>
</feature>
<feature type="topological domain" description="Extracellular" evidence="1">
    <location>
        <begin position="603"/>
        <end position="616"/>
    </location>
</feature>
<feature type="transmembrane region" description="Helical" evidence="1">
    <location>
        <begin position="617"/>
        <end position="637"/>
    </location>
</feature>
<feature type="topological domain" description="Cytoplasmic" evidence="1">
    <location>
        <begin position="638"/>
        <end position="660"/>
    </location>
</feature>
<feature type="transmembrane region" description="Helical" evidence="1">
    <location>
        <begin position="661"/>
        <end position="681"/>
    </location>
</feature>
<feature type="topological domain" description="Extracellular" evidence="1">
    <location>
        <begin position="682"/>
        <end position="694"/>
    </location>
</feature>
<feature type="transmembrane region" description="Helical" evidence="1">
    <location>
        <begin position="695"/>
        <end position="715"/>
    </location>
</feature>
<feature type="topological domain" description="Cytoplasmic" evidence="1">
    <location>
        <begin position="716"/>
        <end position="749"/>
    </location>
</feature>
<feature type="transmembrane region" description="Helical" evidence="1">
    <location>
        <begin position="750"/>
        <end position="770"/>
    </location>
</feature>
<feature type="topological domain" description="Extracellular" evidence="1">
    <location>
        <begin position="771"/>
        <end position="796"/>
    </location>
</feature>
<feature type="transmembrane region" description="Helical" evidence="1">
    <location>
        <begin position="797"/>
        <end position="817"/>
    </location>
</feature>
<feature type="topological domain" description="Cytoplasmic" evidence="1">
    <location>
        <begin position="818"/>
        <end position="861"/>
    </location>
</feature>
<feature type="transmembrane region" description="Helical" evidence="1">
    <location>
        <begin position="862"/>
        <end position="882"/>
    </location>
</feature>
<feature type="topological domain" description="Extracellular" evidence="1">
    <location>
        <begin position="883"/>
        <end position="967"/>
    </location>
</feature>
<feature type="region of interest" description="Disordered" evidence="2">
    <location>
        <begin position="1"/>
        <end position="240"/>
    </location>
</feature>
<feature type="compositionally biased region" description="Polar residues" evidence="2">
    <location>
        <begin position="1"/>
        <end position="10"/>
    </location>
</feature>
<feature type="compositionally biased region" description="Polar residues" evidence="2">
    <location>
        <begin position="21"/>
        <end position="31"/>
    </location>
</feature>
<feature type="compositionally biased region" description="Polar residues" evidence="2">
    <location>
        <begin position="53"/>
        <end position="62"/>
    </location>
</feature>
<feature type="compositionally biased region" description="Polar residues" evidence="2">
    <location>
        <begin position="168"/>
        <end position="184"/>
    </location>
</feature>
<feature type="splice variant" id="VSP_026047" description="In isoform 2." evidence="4 5 6">
    <location>
        <begin position="1"/>
        <end position="210"/>
    </location>
</feature>
<feature type="splice variant" id="VSP_026048" description="In isoform 2." evidence="4 5 6">
    <original>GAENQPNSPRFYGKPDYPGAEEGDGYSSSKSLAVIRRGNGPFGMLGRRNEDYPEGIGMVSMEMAGDPRNGYVNPAYTRRISPVCPDRNLLLCAHDWHTS</original>
    <variation>MQSDDQVDEIIIEVENVPSGVQNHLVSSQIALRKSSANPAFCVLSSSAADRVDCQIFNPGNDRRHNRLLRFSSLNESISQIYHGSECLVTDESCTFHET</variation>
    <location>
        <begin position="211"/>
        <end position="309"/>
    </location>
</feature>
<feature type="sequence conflict" description="In Ref. 1; AAP69873." evidence="7" ref="1">
    <original>I</original>
    <variation>V</variation>
    <location>
        <position position="527"/>
    </location>
</feature>
<feature type="sequence conflict" description="In Ref. 1; AAP69873 and 4; AAH46390." evidence="7" ref="1 4">
    <original>V</original>
    <variation>I</variation>
    <location>
        <position position="658"/>
    </location>
</feature>
<feature type="sequence conflict" description="In Ref. 1; AAP69873." evidence="7" ref="1">
    <original>M</original>
    <variation>V</variation>
    <location>
        <position position="793"/>
    </location>
</feature>
<feature type="sequence conflict" description="In Ref. 1; AAP69873." evidence="7" ref="1">
    <original>N</original>
    <variation>D</variation>
    <location>
        <position position="926"/>
    </location>
</feature>
<feature type="sequence conflict" description="In Ref. 4; AAH46390." evidence="7" ref="4">
    <original>E</original>
    <variation>D</variation>
    <location>
        <position position="947"/>
    </location>
</feature>
<dbReference type="EMBL" id="AY236495">
    <property type="protein sequence ID" value="AAP69873.1"/>
    <property type="molecule type" value="mRNA"/>
</dbReference>
<dbReference type="EMBL" id="AK016573">
    <property type="protein sequence ID" value="BAB30314.1"/>
    <property type="molecule type" value="mRNA"/>
</dbReference>
<dbReference type="EMBL" id="AY263159">
    <property type="protein sequence ID" value="AAP78774.1"/>
    <property type="molecule type" value="mRNA"/>
</dbReference>
<dbReference type="EMBL" id="BC046390">
    <property type="protein sequence ID" value="AAH46390.1"/>
    <property type="molecule type" value="mRNA"/>
</dbReference>
<dbReference type="EMBL" id="BC108382">
    <property type="protein sequence ID" value="AAI08383.1"/>
    <property type="molecule type" value="mRNA"/>
</dbReference>
<dbReference type="CCDS" id="CCDS21773.1">
    <molecule id="Q32NZ6-2"/>
</dbReference>
<dbReference type="CCDS" id="CCDS52374.1">
    <molecule id="Q32NZ6-1"/>
</dbReference>
<dbReference type="RefSeq" id="NP_001098722.1">
    <molecule id="Q32NZ6-1"/>
    <property type="nucleotide sequence ID" value="NM_001105252.1"/>
</dbReference>
<dbReference type="RefSeq" id="NP_083206.1">
    <molecule id="Q32NZ6-2"/>
    <property type="nucleotide sequence ID" value="NM_028930.3"/>
</dbReference>
<dbReference type="RefSeq" id="XP_011240226.1">
    <molecule id="Q32NZ6-1"/>
    <property type="nucleotide sequence ID" value="XM_011241924.3"/>
</dbReference>
<dbReference type="SMR" id="Q32NZ6"/>
<dbReference type="FunCoup" id="Q32NZ6">
    <property type="interactions" value="4"/>
</dbReference>
<dbReference type="STRING" id="10090.ENSMUSP00000112434"/>
<dbReference type="GlyGen" id="Q32NZ6">
    <property type="glycosylation" value="2 sites, 2 N-linked glycans (2 sites)"/>
</dbReference>
<dbReference type="iPTMnet" id="Q32NZ6"/>
<dbReference type="PhosphoSitePlus" id="Q32NZ6"/>
<dbReference type="SwissPalm" id="Q32NZ6"/>
<dbReference type="PaxDb" id="10090-ENSMUSP00000049784"/>
<dbReference type="ProteomicsDB" id="259240">
    <molecule id="Q32NZ6-1"/>
</dbReference>
<dbReference type="ProteomicsDB" id="259241">
    <molecule id="Q32NZ6-2"/>
</dbReference>
<dbReference type="Antibodypedia" id="25361">
    <property type="antibodies" value="81 antibodies from 16 providers"/>
</dbReference>
<dbReference type="DNASU" id="74424"/>
<dbReference type="Ensembl" id="ENSMUST00000057320.8">
    <molecule id="Q32NZ6-2"/>
    <property type="protein sequence ID" value="ENSMUSP00000049784.8"/>
    <property type="gene ID" value="ENSMUSG00000030650.19"/>
</dbReference>
<dbReference type="Ensembl" id="ENSMUST00000098088.11">
    <molecule id="Q32NZ6-1"/>
    <property type="protein sequence ID" value="ENSMUSP00000095694.5"/>
    <property type="gene ID" value="ENSMUSG00000030650.19"/>
</dbReference>
<dbReference type="Ensembl" id="ENSMUST00000121715.8">
    <molecule id="Q32NZ6-1"/>
    <property type="protein sequence ID" value="ENSMUSP00000112434.2"/>
    <property type="gene ID" value="ENSMUSG00000030650.19"/>
</dbReference>
<dbReference type="Ensembl" id="ENSMUST00000121744.9">
    <molecule id="Q32NZ6-1"/>
    <property type="protein sequence ID" value="ENSMUSP00000114137.2"/>
    <property type="gene ID" value="ENSMUSG00000030650.19"/>
</dbReference>
<dbReference type="GeneID" id="74424"/>
<dbReference type="KEGG" id="mmu:74424"/>
<dbReference type="UCSC" id="uc009jke.2">
    <molecule id="Q32NZ6-1"/>
    <property type="organism name" value="mouse"/>
</dbReference>
<dbReference type="UCSC" id="uc009jkg.2">
    <molecule id="Q32NZ6-2"/>
    <property type="organism name" value="mouse"/>
</dbReference>
<dbReference type="AGR" id="MGI:1921674"/>
<dbReference type="CTD" id="79838"/>
<dbReference type="MGI" id="MGI:1921674">
    <property type="gene designation" value="Tmc5"/>
</dbReference>
<dbReference type="VEuPathDB" id="HostDB:ENSMUSG00000030650"/>
<dbReference type="eggNOG" id="ENOG502QQB2">
    <property type="taxonomic scope" value="Eukaryota"/>
</dbReference>
<dbReference type="GeneTree" id="ENSGT01050000244894"/>
<dbReference type="HOGENOM" id="CLU_014592_0_0_1"/>
<dbReference type="InParanoid" id="Q32NZ6"/>
<dbReference type="OMA" id="SLPHAYF"/>
<dbReference type="OrthoDB" id="1936208at2759"/>
<dbReference type="PhylomeDB" id="Q32NZ6"/>
<dbReference type="TreeFam" id="TF313462"/>
<dbReference type="BioGRID-ORCS" id="74424">
    <property type="hits" value="2 hits in 78 CRISPR screens"/>
</dbReference>
<dbReference type="ChiTaRS" id="Tmc5">
    <property type="organism name" value="mouse"/>
</dbReference>
<dbReference type="PRO" id="PR:Q32NZ6"/>
<dbReference type="Proteomes" id="UP000000589">
    <property type="component" value="Chromosome 7"/>
</dbReference>
<dbReference type="RNAct" id="Q32NZ6">
    <property type="molecule type" value="protein"/>
</dbReference>
<dbReference type="Bgee" id="ENSMUSG00000030650">
    <property type="expression patterns" value="Expressed in spermatid and 74 other cell types or tissues"/>
</dbReference>
<dbReference type="ExpressionAtlas" id="Q32NZ6">
    <property type="expression patterns" value="baseline and differential"/>
</dbReference>
<dbReference type="GO" id="GO:0005886">
    <property type="term" value="C:plasma membrane"/>
    <property type="evidence" value="ECO:0007669"/>
    <property type="project" value="InterPro"/>
</dbReference>
<dbReference type="InterPro" id="IPR038900">
    <property type="entry name" value="TMC"/>
</dbReference>
<dbReference type="InterPro" id="IPR012496">
    <property type="entry name" value="TMC_dom"/>
</dbReference>
<dbReference type="PANTHER" id="PTHR23302:SF5">
    <property type="entry name" value="TRANSMEMBRANE CHANNEL-LIKE PROTEIN 5"/>
    <property type="match status" value="1"/>
</dbReference>
<dbReference type="PANTHER" id="PTHR23302">
    <property type="entry name" value="TRANSMEMBRANE CHANNEL-RELATED"/>
    <property type="match status" value="1"/>
</dbReference>
<dbReference type="Pfam" id="PF07810">
    <property type="entry name" value="TMC"/>
    <property type="match status" value="1"/>
</dbReference>
<proteinExistence type="evidence at transcript level"/>